<protein>
    <recommendedName>
        <fullName evidence="1">S-adenosylmethionine decarboxylase proenzyme</fullName>
        <shortName evidence="1">AdoMetDC</shortName>
        <shortName evidence="1">SAMDC</shortName>
        <ecNumber evidence="1">4.1.1.50</ecNumber>
    </recommendedName>
    <component>
        <recommendedName>
            <fullName evidence="1">S-adenosylmethionine decarboxylase beta chain</fullName>
        </recommendedName>
    </component>
    <component>
        <recommendedName>
            <fullName evidence="1">S-adenosylmethionine decarboxylase alpha chain</fullName>
        </recommendedName>
    </component>
</protein>
<feature type="chain" id="PRO_1000013672" description="S-adenosylmethionine decarboxylase beta chain" evidence="1">
    <location>
        <begin position="1"/>
        <end position="62"/>
    </location>
</feature>
<feature type="chain" id="PRO_0000315025" description="S-adenosylmethionine decarboxylase alpha chain" evidence="1">
    <location>
        <begin position="63"/>
        <end position="124"/>
    </location>
</feature>
<feature type="active site" description="Schiff-base intermediate with substrate; via pyruvic acid" evidence="1">
    <location>
        <position position="63"/>
    </location>
</feature>
<feature type="active site" description="Proton acceptor; for processing activity" evidence="1">
    <location>
        <position position="68"/>
    </location>
</feature>
<feature type="active site" description="Proton donor; for catalytic activity" evidence="1">
    <location>
        <position position="83"/>
    </location>
</feature>
<feature type="site" description="Cleavage (non-hydrolytic); by autolysis" evidence="1">
    <location>
        <begin position="62"/>
        <end position="63"/>
    </location>
</feature>
<feature type="modified residue" description="Pyruvic acid (Ser); by autocatalysis" evidence="1">
    <location>
        <position position="63"/>
    </location>
</feature>
<organism>
    <name type="scientific">Acetivibrio thermocellus (strain ATCC 27405 / DSM 1237 / JCM 9322 / NBRC 103400 / NCIMB 10682 / NRRL B-4536 / VPI 7372)</name>
    <name type="common">Clostridium thermocellum</name>
    <dbReference type="NCBI Taxonomy" id="203119"/>
    <lineage>
        <taxon>Bacteria</taxon>
        <taxon>Bacillati</taxon>
        <taxon>Bacillota</taxon>
        <taxon>Clostridia</taxon>
        <taxon>Eubacteriales</taxon>
        <taxon>Oscillospiraceae</taxon>
        <taxon>Acetivibrio</taxon>
    </lineage>
</organism>
<sequence>MNALGRHILAEIYGCDAAILNNRNLIEKIMVESALEAGAEVREVAFHKFSPQGVSGVVVISESHLAIHTWPELGYAAVDVFTCGEKVNPWDACNYLTERFKAKHMTATEVKRGVFEEPVKVANL</sequence>
<accession>A3DDC1</accession>
<gene>
    <name evidence="1" type="primary">speH</name>
    <name type="ordered locus">Cthe_0715</name>
</gene>
<evidence type="ECO:0000255" key="1">
    <source>
        <dbReference type="HAMAP-Rule" id="MF_00464"/>
    </source>
</evidence>
<name>SPEH_ACET2</name>
<dbReference type="EC" id="4.1.1.50" evidence="1"/>
<dbReference type="EMBL" id="CP000568">
    <property type="protein sequence ID" value="ABN51950.1"/>
    <property type="molecule type" value="Genomic_DNA"/>
</dbReference>
<dbReference type="SMR" id="A3DDC1"/>
<dbReference type="STRING" id="203119.Cthe_0715"/>
<dbReference type="GeneID" id="35806119"/>
<dbReference type="KEGG" id="cth:Cthe_0715"/>
<dbReference type="eggNOG" id="COG1586">
    <property type="taxonomic scope" value="Bacteria"/>
</dbReference>
<dbReference type="HOGENOM" id="CLU_125470_2_3_9"/>
<dbReference type="OrthoDB" id="9793120at2"/>
<dbReference type="UniPathway" id="UPA00331">
    <property type="reaction ID" value="UER00451"/>
</dbReference>
<dbReference type="Proteomes" id="UP000002145">
    <property type="component" value="Chromosome"/>
</dbReference>
<dbReference type="GO" id="GO:0005829">
    <property type="term" value="C:cytosol"/>
    <property type="evidence" value="ECO:0007669"/>
    <property type="project" value="TreeGrafter"/>
</dbReference>
<dbReference type="GO" id="GO:0004014">
    <property type="term" value="F:adenosylmethionine decarboxylase activity"/>
    <property type="evidence" value="ECO:0007669"/>
    <property type="project" value="UniProtKB-UniRule"/>
</dbReference>
<dbReference type="GO" id="GO:0008295">
    <property type="term" value="P:spermidine biosynthetic process"/>
    <property type="evidence" value="ECO:0007669"/>
    <property type="project" value="UniProtKB-UniRule"/>
</dbReference>
<dbReference type="FunFam" id="3.30.360.110:FF:000001">
    <property type="entry name" value="S-adenosylmethionine decarboxylase proenzyme"/>
    <property type="match status" value="1"/>
</dbReference>
<dbReference type="Gene3D" id="3.30.160.750">
    <property type="match status" value="1"/>
</dbReference>
<dbReference type="Gene3D" id="3.30.360.110">
    <property type="entry name" value="S-adenosylmethionine decarboxylase domain"/>
    <property type="match status" value="1"/>
</dbReference>
<dbReference type="HAMAP" id="MF_00464">
    <property type="entry name" value="AdoMetDC_1"/>
    <property type="match status" value="1"/>
</dbReference>
<dbReference type="InterPro" id="IPR042286">
    <property type="entry name" value="AdoMetDC_C"/>
</dbReference>
<dbReference type="InterPro" id="IPR003826">
    <property type="entry name" value="AdoMetDC_fam_prok"/>
</dbReference>
<dbReference type="InterPro" id="IPR042284">
    <property type="entry name" value="AdoMetDC_N"/>
</dbReference>
<dbReference type="InterPro" id="IPR016067">
    <property type="entry name" value="S-AdoMet_deCO2ase_core"/>
</dbReference>
<dbReference type="InterPro" id="IPR017716">
    <property type="entry name" value="S-AdoMet_deCOase_pro-enz"/>
</dbReference>
<dbReference type="NCBIfam" id="TIGR03330">
    <property type="entry name" value="SAM_DCase_Bsu"/>
    <property type="match status" value="1"/>
</dbReference>
<dbReference type="PANTHER" id="PTHR33866">
    <property type="entry name" value="S-ADENOSYLMETHIONINE DECARBOXYLASE PROENZYME"/>
    <property type="match status" value="1"/>
</dbReference>
<dbReference type="PANTHER" id="PTHR33866:SF2">
    <property type="entry name" value="S-ADENOSYLMETHIONINE DECARBOXYLASE PROENZYME"/>
    <property type="match status" value="1"/>
</dbReference>
<dbReference type="Pfam" id="PF02675">
    <property type="entry name" value="AdoMet_dc"/>
    <property type="match status" value="1"/>
</dbReference>
<dbReference type="SUPFAM" id="SSF56276">
    <property type="entry name" value="S-adenosylmethionine decarboxylase"/>
    <property type="match status" value="1"/>
</dbReference>
<keyword id="KW-0068">Autocatalytic cleavage</keyword>
<keyword id="KW-0210">Decarboxylase</keyword>
<keyword id="KW-0456">Lyase</keyword>
<keyword id="KW-0620">Polyamine biosynthesis</keyword>
<keyword id="KW-0670">Pyruvate</keyword>
<keyword id="KW-1185">Reference proteome</keyword>
<keyword id="KW-0949">S-adenosyl-L-methionine</keyword>
<keyword id="KW-0704">Schiff base</keyword>
<keyword id="KW-0745">Spermidine biosynthesis</keyword>
<keyword id="KW-0865">Zymogen</keyword>
<proteinExistence type="inferred from homology"/>
<comment type="function">
    <text evidence="1">Catalyzes the decarboxylation of S-adenosylmethionine to S-adenosylmethioninamine (dcAdoMet), the propylamine donor required for the synthesis of the polyamines spermine and spermidine from the diamine putrescine.</text>
</comment>
<comment type="catalytic activity">
    <reaction evidence="1">
        <text>S-adenosyl-L-methionine + H(+) = S-adenosyl 3-(methylsulfanyl)propylamine + CO2</text>
        <dbReference type="Rhea" id="RHEA:15981"/>
        <dbReference type="ChEBI" id="CHEBI:15378"/>
        <dbReference type="ChEBI" id="CHEBI:16526"/>
        <dbReference type="ChEBI" id="CHEBI:57443"/>
        <dbReference type="ChEBI" id="CHEBI:59789"/>
        <dbReference type="EC" id="4.1.1.50"/>
    </reaction>
</comment>
<comment type="cofactor">
    <cofactor evidence="1">
        <name>pyruvate</name>
        <dbReference type="ChEBI" id="CHEBI:15361"/>
    </cofactor>
    <text evidence="1">Binds 1 pyruvoyl group covalently per subunit.</text>
</comment>
<comment type="pathway">
    <text evidence="1">Amine and polyamine biosynthesis; S-adenosylmethioninamine biosynthesis; S-adenosylmethioninamine from S-adenosyl-L-methionine: step 1/1.</text>
</comment>
<comment type="subunit">
    <text evidence="1">Heterotetramer of two alpha and two beta chains arranged as a dimer of alpha/beta heterodimers.</text>
</comment>
<comment type="PTM">
    <text evidence="1">Is synthesized initially as an inactive proenzyme. Formation of the active enzyme involves a self-maturation process in which the active site pyruvoyl group is generated from an internal serine residue via an autocatalytic post-translational modification. Two non-identical subunits are generated from the proenzyme in this reaction, and the pyruvate is formed at the N-terminus of the alpha chain, which is derived from the carboxyl end of the proenzyme. The post-translation cleavage follows an unusual pathway, termed non-hydrolytic serinolysis, in which the side chain hydroxyl group of the serine supplies its oxygen atom to form the C-terminus of the beta chain, while the remainder of the serine residue undergoes an oxidative deamination to produce ammonia and the pyruvoyl group blocking the N-terminus of the alpha chain.</text>
</comment>
<comment type="similarity">
    <text evidence="1">Belongs to the prokaryotic AdoMetDC family. Type 1 subfamily.</text>
</comment>
<reference key="1">
    <citation type="submission" date="2007-02" db="EMBL/GenBank/DDBJ databases">
        <title>Complete sequence of Clostridium thermocellum ATCC 27405.</title>
        <authorList>
            <consortium name="US DOE Joint Genome Institute"/>
            <person name="Copeland A."/>
            <person name="Lucas S."/>
            <person name="Lapidus A."/>
            <person name="Barry K."/>
            <person name="Detter J.C."/>
            <person name="Glavina del Rio T."/>
            <person name="Hammon N."/>
            <person name="Israni S."/>
            <person name="Dalin E."/>
            <person name="Tice H."/>
            <person name="Pitluck S."/>
            <person name="Chertkov O."/>
            <person name="Brettin T."/>
            <person name="Bruce D."/>
            <person name="Han C."/>
            <person name="Tapia R."/>
            <person name="Gilna P."/>
            <person name="Schmutz J."/>
            <person name="Larimer F."/>
            <person name="Land M."/>
            <person name="Hauser L."/>
            <person name="Kyrpides N."/>
            <person name="Mikhailova N."/>
            <person name="Wu J.H.D."/>
            <person name="Newcomb M."/>
            <person name="Richardson P."/>
        </authorList>
    </citation>
    <scope>NUCLEOTIDE SEQUENCE [LARGE SCALE GENOMIC DNA]</scope>
    <source>
        <strain>ATCC 27405 / DSM 1237 / JCM 9322 / NBRC 103400 / NCIMB 10682 / NRRL B-4536 / VPI 7372</strain>
    </source>
</reference>